<sequence length="311" mass="33961">MALPILFDCDPGHDDAIAIVLALASPELDVKAITSSAGNQTPDKTLRNVLRMLTLLNRTDISVAGGAVKPLMRDLIIADNVHGESGLDGPALPEPAFAPLDCTAVELMAKVLRESPEPVTIVSTGPQTNVALLLNSHPELHAKIARIVIMGGAMGLGNWTPAAEFNIYVDPEAAEIVFQSGIRVVMAGLDVTHKAQIHREDTERFRAIGNPVSTIVAELLDFFFEYHKDEKWGFIGAPLHDPCTIAWLLKPELFTTVERWVGVETQGKYTQGMTVVDYYFLSGNKPNATVMVDVDRQGFVDLLAERLQYYA</sequence>
<evidence type="ECO:0000255" key="1">
    <source>
        <dbReference type="HAMAP-Rule" id="MF_01431"/>
    </source>
</evidence>
<organism>
    <name type="scientific">Salmonella newport (strain SL254)</name>
    <dbReference type="NCBI Taxonomy" id="423368"/>
    <lineage>
        <taxon>Bacteria</taxon>
        <taxon>Pseudomonadati</taxon>
        <taxon>Pseudomonadota</taxon>
        <taxon>Gammaproteobacteria</taxon>
        <taxon>Enterobacterales</taxon>
        <taxon>Enterobacteriaceae</taxon>
        <taxon>Salmonella</taxon>
    </lineage>
</organism>
<dbReference type="EC" id="3.2.-.-" evidence="1"/>
<dbReference type="EMBL" id="CP001113">
    <property type="protein sequence ID" value="ACF64883.1"/>
    <property type="molecule type" value="Genomic_DNA"/>
</dbReference>
<dbReference type="RefSeq" id="WP_001207486.1">
    <property type="nucleotide sequence ID" value="NZ_CCMR01000003.1"/>
</dbReference>
<dbReference type="SMR" id="B4SYM0"/>
<dbReference type="KEGG" id="see:SNSL254_A0718"/>
<dbReference type="HOGENOM" id="CLU_036838_2_0_6"/>
<dbReference type="Proteomes" id="UP000008824">
    <property type="component" value="Chromosome"/>
</dbReference>
<dbReference type="GO" id="GO:0005829">
    <property type="term" value="C:cytosol"/>
    <property type="evidence" value="ECO:0007669"/>
    <property type="project" value="TreeGrafter"/>
</dbReference>
<dbReference type="GO" id="GO:0008477">
    <property type="term" value="F:purine nucleosidase activity"/>
    <property type="evidence" value="ECO:0007669"/>
    <property type="project" value="TreeGrafter"/>
</dbReference>
<dbReference type="GO" id="GO:0045437">
    <property type="term" value="F:uridine nucleosidase activity"/>
    <property type="evidence" value="ECO:0007669"/>
    <property type="project" value="InterPro"/>
</dbReference>
<dbReference type="GO" id="GO:0015949">
    <property type="term" value="P:nucleobase-containing small molecule interconversion"/>
    <property type="evidence" value="ECO:0007669"/>
    <property type="project" value="InterPro"/>
</dbReference>
<dbReference type="GO" id="GO:0006152">
    <property type="term" value="P:purine nucleoside catabolic process"/>
    <property type="evidence" value="ECO:0007669"/>
    <property type="project" value="TreeGrafter"/>
</dbReference>
<dbReference type="GO" id="GO:0006206">
    <property type="term" value="P:pyrimidine nucleobase metabolic process"/>
    <property type="evidence" value="ECO:0007669"/>
    <property type="project" value="UniProtKB-UniRule"/>
</dbReference>
<dbReference type="CDD" id="cd02651">
    <property type="entry name" value="nuc_hydro_IU_UC_XIUA"/>
    <property type="match status" value="1"/>
</dbReference>
<dbReference type="FunFam" id="3.90.245.10:FF:000001">
    <property type="entry name" value="Pyrimidine-specific ribonucleoside hydrolase RihA"/>
    <property type="match status" value="1"/>
</dbReference>
<dbReference type="Gene3D" id="3.90.245.10">
    <property type="entry name" value="Ribonucleoside hydrolase-like"/>
    <property type="match status" value="1"/>
</dbReference>
<dbReference type="HAMAP" id="MF_01431">
    <property type="entry name" value="Pyrim_hydro_RihA"/>
    <property type="match status" value="1"/>
</dbReference>
<dbReference type="InterPro" id="IPR015910">
    <property type="entry name" value="I/U_nuclsd_hydro_CS"/>
</dbReference>
<dbReference type="InterPro" id="IPR001910">
    <property type="entry name" value="Inosine/uridine_hydrolase_dom"/>
</dbReference>
<dbReference type="InterPro" id="IPR023186">
    <property type="entry name" value="IUNH"/>
</dbReference>
<dbReference type="InterPro" id="IPR022975">
    <property type="entry name" value="Pyrim_hydro_RihA"/>
</dbReference>
<dbReference type="InterPro" id="IPR036452">
    <property type="entry name" value="Ribo_hydro-like"/>
</dbReference>
<dbReference type="NCBIfam" id="NF007761">
    <property type="entry name" value="PRK10443.1"/>
    <property type="match status" value="1"/>
</dbReference>
<dbReference type="PANTHER" id="PTHR12304">
    <property type="entry name" value="INOSINE-URIDINE PREFERRING NUCLEOSIDE HYDROLASE"/>
    <property type="match status" value="1"/>
</dbReference>
<dbReference type="PANTHER" id="PTHR12304:SF4">
    <property type="entry name" value="URIDINE NUCLEOSIDASE"/>
    <property type="match status" value="1"/>
</dbReference>
<dbReference type="Pfam" id="PF01156">
    <property type="entry name" value="IU_nuc_hydro"/>
    <property type="match status" value="1"/>
</dbReference>
<dbReference type="SUPFAM" id="SSF53590">
    <property type="entry name" value="Nucleoside hydrolase"/>
    <property type="match status" value="1"/>
</dbReference>
<dbReference type="PROSITE" id="PS01247">
    <property type="entry name" value="IUNH"/>
    <property type="match status" value="1"/>
</dbReference>
<accession>B4SYM0</accession>
<feature type="chain" id="PRO_1000145803" description="Pyrimidine-specific ribonucleoside hydrolase RihA">
    <location>
        <begin position="1"/>
        <end position="311"/>
    </location>
</feature>
<feature type="active site" evidence="1">
    <location>
        <position position="240"/>
    </location>
</feature>
<gene>
    <name evidence="1" type="primary">rihA</name>
    <name type="ordered locus">SNSL254_A0718</name>
</gene>
<proteinExistence type="inferred from homology"/>
<reference key="1">
    <citation type="journal article" date="2011" name="J. Bacteriol.">
        <title>Comparative genomics of 28 Salmonella enterica isolates: evidence for CRISPR-mediated adaptive sublineage evolution.</title>
        <authorList>
            <person name="Fricke W.F."/>
            <person name="Mammel M.K."/>
            <person name="McDermott P.F."/>
            <person name="Tartera C."/>
            <person name="White D.G."/>
            <person name="Leclerc J.E."/>
            <person name="Ravel J."/>
            <person name="Cebula T.A."/>
        </authorList>
    </citation>
    <scope>NUCLEOTIDE SEQUENCE [LARGE SCALE GENOMIC DNA]</scope>
    <source>
        <strain>SL254</strain>
    </source>
</reference>
<name>RIHA_SALNS</name>
<protein>
    <recommendedName>
        <fullName evidence="1">Pyrimidine-specific ribonucleoside hydrolase RihA</fullName>
        <ecNumber evidence="1">3.2.-.-</ecNumber>
    </recommendedName>
    <alternativeName>
        <fullName evidence="1">Cytidine/uridine-specific hydrolase</fullName>
    </alternativeName>
</protein>
<keyword id="KW-0326">Glycosidase</keyword>
<keyword id="KW-0378">Hydrolase</keyword>
<comment type="function">
    <text evidence="1">Hydrolyzes cytidine or uridine to ribose and cytosine or uracil, respectively.</text>
</comment>
<comment type="similarity">
    <text evidence="1">Belongs to the IUNH family. RihA subfamily.</text>
</comment>